<feature type="chain" id="PRO_0000269471" description="Small ubiquitin-related modifier 2-A">
    <location>
        <begin position="1"/>
        <end position="93"/>
    </location>
</feature>
<feature type="propeptide" id="PRO_0000269472" evidence="1">
    <location>
        <begin position="94"/>
        <end position="95"/>
    </location>
</feature>
<feature type="domain" description="Ubiquitin-like" evidence="2">
    <location>
        <begin position="16"/>
        <end position="95"/>
    </location>
</feature>
<feature type="cross-link" description="Glycyl lysine isopeptide (Lys-Gly) (interchain with G-Cter in SUMO)" evidence="1">
    <location>
        <position position="11"/>
    </location>
</feature>
<feature type="cross-link" description="Glycyl lysine isopeptide (Gly-Lys) (interchain with K-? in acceptor proteins)" evidence="2">
    <location>
        <position position="93"/>
    </location>
</feature>
<protein>
    <recommendedName>
        <fullName>Small ubiquitin-related modifier 2-A</fullName>
        <shortName>SUMO-2-A</shortName>
    </recommendedName>
</protein>
<keyword id="KW-1017">Isopeptide bond</keyword>
<keyword id="KW-0539">Nucleus</keyword>
<keyword id="KW-1185">Reference proteome</keyword>
<keyword id="KW-0832">Ubl conjugation</keyword>
<keyword id="KW-0833">Ubl conjugation pathway</keyword>
<organism>
    <name type="scientific">Xenopus laevis</name>
    <name type="common">African clawed frog</name>
    <dbReference type="NCBI Taxonomy" id="8355"/>
    <lineage>
        <taxon>Eukaryota</taxon>
        <taxon>Metazoa</taxon>
        <taxon>Chordata</taxon>
        <taxon>Craniata</taxon>
        <taxon>Vertebrata</taxon>
        <taxon>Euteleostomi</taxon>
        <taxon>Amphibia</taxon>
        <taxon>Batrachia</taxon>
        <taxon>Anura</taxon>
        <taxon>Pipoidea</taxon>
        <taxon>Pipidae</taxon>
        <taxon>Xenopodinae</taxon>
        <taxon>Xenopus</taxon>
        <taxon>Xenopus</taxon>
    </lineage>
</organism>
<dbReference type="EMBL" id="BC045271">
    <property type="protein sequence ID" value="AAH45271.1"/>
    <property type="molecule type" value="mRNA"/>
</dbReference>
<dbReference type="EMBL" id="BC106623">
    <property type="protein sequence ID" value="AAI06624.1"/>
    <property type="molecule type" value="mRNA"/>
</dbReference>
<dbReference type="RefSeq" id="NP_001080085.1">
    <property type="nucleotide sequence ID" value="NM_001086616.1"/>
</dbReference>
<dbReference type="SMR" id="Q7ZTK7"/>
<dbReference type="DNASU" id="379777"/>
<dbReference type="GeneID" id="379777"/>
<dbReference type="KEGG" id="xla:379777"/>
<dbReference type="AGR" id="Xenbase:XB-GENE-6254945"/>
<dbReference type="CTD" id="379777"/>
<dbReference type="Xenbase" id="XB-GENE-6254945">
    <property type="gene designation" value="sumo2.L"/>
</dbReference>
<dbReference type="OrthoDB" id="9925208at2759"/>
<dbReference type="Proteomes" id="UP000186698">
    <property type="component" value="Chromosome 9_10L"/>
</dbReference>
<dbReference type="Bgee" id="379777">
    <property type="expression patterns" value="Expressed in gastrula and 19 other cell types or tissues"/>
</dbReference>
<dbReference type="GO" id="GO:0005634">
    <property type="term" value="C:nucleus"/>
    <property type="evidence" value="ECO:0000318"/>
    <property type="project" value="GO_Central"/>
</dbReference>
<dbReference type="GO" id="GO:0031386">
    <property type="term" value="F:protein tag activity"/>
    <property type="evidence" value="ECO:0000318"/>
    <property type="project" value="GO_Central"/>
</dbReference>
<dbReference type="GO" id="GO:0044389">
    <property type="term" value="F:ubiquitin-like protein ligase binding"/>
    <property type="evidence" value="ECO:0000318"/>
    <property type="project" value="GO_Central"/>
</dbReference>
<dbReference type="GO" id="GO:0016925">
    <property type="term" value="P:protein sumoylation"/>
    <property type="evidence" value="ECO:0000318"/>
    <property type="project" value="GO_Central"/>
</dbReference>
<dbReference type="CDD" id="cd16115">
    <property type="entry name" value="Ubl_SUMO2_3_4"/>
    <property type="match status" value="1"/>
</dbReference>
<dbReference type="FunFam" id="3.10.20.90:FF:000482">
    <property type="entry name" value="Small ubiquitin-related modifier 2"/>
    <property type="match status" value="1"/>
</dbReference>
<dbReference type="Gene3D" id="3.10.20.90">
    <property type="entry name" value="Phosphatidylinositol 3-kinase Catalytic Subunit, Chain A, domain 1"/>
    <property type="match status" value="1"/>
</dbReference>
<dbReference type="InterPro" id="IPR022617">
    <property type="entry name" value="Rad60/SUMO-like_dom"/>
</dbReference>
<dbReference type="InterPro" id="IPR000626">
    <property type="entry name" value="Ubiquitin-like_dom"/>
</dbReference>
<dbReference type="InterPro" id="IPR029071">
    <property type="entry name" value="Ubiquitin-like_domsf"/>
</dbReference>
<dbReference type="PANTHER" id="PTHR10562">
    <property type="entry name" value="SMALL UBIQUITIN-RELATED MODIFIER"/>
    <property type="match status" value="1"/>
</dbReference>
<dbReference type="Pfam" id="PF11976">
    <property type="entry name" value="Rad60-SLD"/>
    <property type="match status" value="1"/>
</dbReference>
<dbReference type="SMART" id="SM00213">
    <property type="entry name" value="UBQ"/>
    <property type="match status" value="1"/>
</dbReference>
<dbReference type="SUPFAM" id="SSF54236">
    <property type="entry name" value="Ubiquitin-like"/>
    <property type="match status" value="1"/>
</dbReference>
<dbReference type="PROSITE" id="PS50053">
    <property type="entry name" value="UBIQUITIN_2"/>
    <property type="match status" value="1"/>
</dbReference>
<proteinExistence type="inferred from homology"/>
<sequence>MADDKPKEGVKTENNDHINLKVAGQDGSVVQFKIKRQTPLSKLMKAYCERQGLSMRQIRFRFDGQPINETDTPAQLEMEDEDTIDVFQQQTGGSF</sequence>
<comment type="function">
    <text evidence="3 4">Ubiquitin-like protein that can be covalently attached to proteins as a monomer or as a lysine-linked polymer. Covalent attachment via an isopeptide bond to its substrates requires prior activation by the E1 complex sae1-sae2 and linkage to the E2 enzyme ube2i, and can be promoted by an E3 ligase such as pias1-4. This post-translational modification on lysine residues of proteins plays a crucial role in a number of cellular processes such as nuclear transport, DNA replication and repair, mitosis and signal transduction. Polymeric sumo2 chains are also susceptible to polyubiquitination which functions as a signal for proteasomal degradation of modified proteins.</text>
</comment>
<comment type="subunit">
    <text>Interacts with sae2 and ube2i. Covalently attached to a number of proteins, including top2.</text>
</comment>
<comment type="subcellular location">
    <subcellularLocation>
        <location evidence="1">Nucleus</location>
    </subcellularLocation>
</comment>
<comment type="PTM">
    <text evidence="1">Polymeric chains can be formed through Lys-11 cross-linking.</text>
</comment>
<comment type="PTM">
    <text evidence="1">Cleavage of precursor form by a sentrin-specific protease is necessary for function.</text>
</comment>
<comment type="similarity">
    <text evidence="5">Belongs to the ubiquitin family. SUMO subfamily.</text>
</comment>
<name>SMO2A_XENLA</name>
<gene>
    <name type="primary">sumo2-a</name>
    <name type="synonym">smt3h2</name>
</gene>
<accession>Q7ZTK7</accession>
<reference key="1">
    <citation type="submission" date="2003-01" db="EMBL/GenBank/DDBJ databases">
        <authorList>
            <consortium name="NIH - Xenopus Gene Collection (XGC) project"/>
        </authorList>
    </citation>
    <scope>NUCLEOTIDE SEQUENCE [LARGE SCALE MRNA]</scope>
    <source>
        <tissue>Embryo</tissue>
        <tissue>Eye</tissue>
    </source>
</reference>
<reference key="2">
    <citation type="journal article" date="2003" name="J. Cell Biol.">
        <title>SUMO-2/3 regulates topoisomerase II in mitosis.</title>
        <authorList>
            <person name="Azuma Y."/>
            <person name="Arnaoutov A."/>
            <person name="Dasso M."/>
        </authorList>
    </citation>
    <scope>FUNCTION</scope>
</reference>
<reference key="3">
    <citation type="journal article" date="2005" name="EMBO J.">
        <title>PIASy mediates SUMO-2 conjugation of Topoisomerase-II on mitotic chromosomes.</title>
        <authorList>
            <person name="Azuma Y."/>
            <person name="Arnaoutov A."/>
            <person name="Anan T."/>
            <person name="Dasso M."/>
        </authorList>
    </citation>
    <scope>FUNCTION</scope>
</reference>
<evidence type="ECO:0000250" key="1"/>
<evidence type="ECO:0000255" key="2">
    <source>
        <dbReference type="PROSITE-ProRule" id="PRU00214"/>
    </source>
</evidence>
<evidence type="ECO:0000269" key="3">
    <source>
    </source>
</evidence>
<evidence type="ECO:0000269" key="4">
    <source>
    </source>
</evidence>
<evidence type="ECO:0000305" key="5"/>